<gene>
    <name evidence="1" type="primary">pgk</name>
    <name type="ordered locus">SeAg_B3231</name>
</gene>
<proteinExistence type="inferred from homology"/>
<name>PGK_SALA4</name>
<evidence type="ECO:0000255" key="1">
    <source>
        <dbReference type="HAMAP-Rule" id="MF_00145"/>
    </source>
</evidence>
<feature type="chain" id="PRO_1000096369" description="Phosphoglycerate kinase">
    <location>
        <begin position="1"/>
        <end position="387"/>
    </location>
</feature>
<feature type="binding site" evidence="1">
    <location>
        <begin position="21"/>
        <end position="23"/>
    </location>
    <ligand>
        <name>substrate</name>
    </ligand>
</feature>
<feature type="binding site" evidence="1">
    <location>
        <position position="36"/>
    </location>
    <ligand>
        <name>substrate</name>
    </ligand>
</feature>
<feature type="binding site" evidence="1">
    <location>
        <begin position="59"/>
        <end position="62"/>
    </location>
    <ligand>
        <name>substrate</name>
    </ligand>
</feature>
<feature type="binding site" evidence="1">
    <location>
        <position position="113"/>
    </location>
    <ligand>
        <name>substrate</name>
    </ligand>
</feature>
<feature type="binding site" evidence="1">
    <location>
        <position position="146"/>
    </location>
    <ligand>
        <name>substrate</name>
    </ligand>
</feature>
<feature type="binding site" evidence="1">
    <location>
        <position position="197"/>
    </location>
    <ligand>
        <name>ATP</name>
        <dbReference type="ChEBI" id="CHEBI:30616"/>
    </ligand>
</feature>
<feature type="binding site" evidence="1">
    <location>
        <position position="314"/>
    </location>
    <ligand>
        <name>ATP</name>
        <dbReference type="ChEBI" id="CHEBI:30616"/>
    </ligand>
</feature>
<feature type="binding site" evidence="1">
    <location>
        <begin position="340"/>
        <end position="343"/>
    </location>
    <ligand>
        <name>ATP</name>
        <dbReference type="ChEBI" id="CHEBI:30616"/>
    </ligand>
</feature>
<protein>
    <recommendedName>
        <fullName evidence="1">Phosphoglycerate kinase</fullName>
        <ecNumber evidence="1">2.7.2.3</ecNumber>
    </recommendedName>
</protein>
<sequence>MSVIKMTDLDLAGKRVFIRADLNVPVKEGKVTSDARIRASLPTIELALKQGAKVMVTSHLGRPTEGEYNEEFSLLPVVNYLKDKLSNPVRLVKDYLDGVDVAEGELVVLENVRFNKGEKKDDEALSKKYAALCDVFVMDAFGTAHRAQASTHGIGKFADVACAGPLLAAELDALGKALKEPARPMVAIVGGSKVSTKLTVLDSLSKIADQLIVGGGIANTFVAAQGHSVGKSLYEADLVDEAKRLLTTCDIPVPTDVRVATEFSETAPATLKSVNDVKEDEQILDIGDASAQQLAEILKNAKTILWNGPVGVFEFPNFRKGTEIVANAIADSEAFSIAGGGDTLAAIDLFGIADKISYISTGGGAFLEFVEGKVLPAVAMLEERAKK</sequence>
<comment type="catalytic activity">
    <reaction evidence="1">
        <text>(2R)-3-phosphoglycerate + ATP = (2R)-3-phospho-glyceroyl phosphate + ADP</text>
        <dbReference type="Rhea" id="RHEA:14801"/>
        <dbReference type="ChEBI" id="CHEBI:30616"/>
        <dbReference type="ChEBI" id="CHEBI:57604"/>
        <dbReference type="ChEBI" id="CHEBI:58272"/>
        <dbReference type="ChEBI" id="CHEBI:456216"/>
        <dbReference type="EC" id="2.7.2.3"/>
    </reaction>
</comment>
<comment type="pathway">
    <text evidence="1">Carbohydrate degradation; glycolysis; pyruvate from D-glyceraldehyde 3-phosphate: step 2/5.</text>
</comment>
<comment type="subunit">
    <text evidence="1">Monomer.</text>
</comment>
<comment type="subcellular location">
    <subcellularLocation>
        <location evidence="1">Cytoplasm</location>
    </subcellularLocation>
</comment>
<comment type="similarity">
    <text evidence="1">Belongs to the phosphoglycerate kinase family.</text>
</comment>
<keyword id="KW-0067">ATP-binding</keyword>
<keyword id="KW-0963">Cytoplasm</keyword>
<keyword id="KW-0324">Glycolysis</keyword>
<keyword id="KW-0418">Kinase</keyword>
<keyword id="KW-0547">Nucleotide-binding</keyword>
<keyword id="KW-0808">Transferase</keyword>
<accession>B5F5J4</accession>
<organism>
    <name type="scientific">Salmonella agona (strain SL483)</name>
    <dbReference type="NCBI Taxonomy" id="454166"/>
    <lineage>
        <taxon>Bacteria</taxon>
        <taxon>Pseudomonadati</taxon>
        <taxon>Pseudomonadota</taxon>
        <taxon>Gammaproteobacteria</taxon>
        <taxon>Enterobacterales</taxon>
        <taxon>Enterobacteriaceae</taxon>
        <taxon>Salmonella</taxon>
    </lineage>
</organism>
<dbReference type="EC" id="2.7.2.3" evidence="1"/>
<dbReference type="EMBL" id="CP001138">
    <property type="protein sequence ID" value="ACH50501.1"/>
    <property type="molecule type" value="Genomic_DNA"/>
</dbReference>
<dbReference type="RefSeq" id="WP_000111274.1">
    <property type="nucleotide sequence ID" value="NC_011149.1"/>
</dbReference>
<dbReference type="SMR" id="B5F5J4"/>
<dbReference type="KEGG" id="sea:SeAg_B3231"/>
<dbReference type="HOGENOM" id="CLU_025427_0_2_6"/>
<dbReference type="UniPathway" id="UPA00109">
    <property type="reaction ID" value="UER00185"/>
</dbReference>
<dbReference type="Proteomes" id="UP000008819">
    <property type="component" value="Chromosome"/>
</dbReference>
<dbReference type="GO" id="GO:0005829">
    <property type="term" value="C:cytosol"/>
    <property type="evidence" value="ECO:0007669"/>
    <property type="project" value="TreeGrafter"/>
</dbReference>
<dbReference type="GO" id="GO:0043531">
    <property type="term" value="F:ADP binding"/>
    <property type="evidence" value="ECO:0007669"/>
    <property type="project" value="TreeGrafter"/>
</dbReference>
<dbReference type="GO" id="GO:0005524">
    <property type="term" value="F:ATP binding"/>
    <property type="evidence" value="ECO:0007669"/>
    <property type="project" value="UniProtKB-KW"/>
</dbReference>
<dbReference type="GO" id="GO:0004618">
    <property type="term" value="F:phosphoglycerate kinase activity"/>
    <property type="evidence" value="ECO:0007669"/>
    <property type="project" value="UniProtKB-UniRule"/>
</dbReference>
<dbReference type="GO" id="GO:0006094">
    <property type="term" value="P:gluconeogenesis"/>
    <property type="evidence" value="ECO:0007669"/>
    <property type="project" value="TreeGrafter"/>
</dbReference>
<dbReference type="GO" id="GO:0006096">
    <property type="term" value="P:glycolytic process"/>
    <property type="evidence" value="ECO:0007669"/>
    <property type="project" value="UniProtKB-UniRule"/>
</dbReference>
<dbReference type="FunFam" id="3.40.50.1260:FF:000001">
    <property type="entry name" value="Phosphoglycerate kinase"/>
    <property type="match status" value="1"/>
</dbReference>
<dbReference type="FunFam" id="3.40.50.1260:FF:000002">
    <property type="entry name" value="Phosphoglycerate kinase"/>
    <property type="match status" value="1"/>
</dbReference>
<dbReference type="Gene3D" id="3.40.50.1260">
    <property type="entry name" value="Phosphoglycerate kinase, N-terminal domain"/>
    <property type="match status" value="2"/>
</dbReference>
<dbReference type="HAMAP" id="MF_00145">
    <property type="entry name" value="Phosphoglyc_kinase"/>
    <property type="match status" value="1"/>
</dbReference>
<dbReference type="InterPro" id="IPR001576">
    <property type="entry name" value="Phosphoglycerate_kinase"/>
</dbReference>
<dbReference type="InterPro" id="IPR015911">
    <property type="entry name" value="Phosphoglycerate_kinase_CS"/>
</dbReference>
<dbReference type="InterPro" id="IPR015824">
    <property type="entry name" value="Phosphoglycerate_kinase_N"/>
</dbReference>
<dbReference type="InterPro" id="IPR036043">
    <property type="entry name" value="Phosphoglycerate_kinase_sf"/>
</dbReference>
<dbReference type="PANTHER" id="PTHR11406">
    <property type="entry name" value="PHOSPHOGLYCERATE KINASE"/>
    <property type="match status" value="1"/>
</dbReference>
<dbReference type="PANTHER" id="PTHR11406:SF23">
    <property type="entry name" value="PHOSPHOGLYCERATE KINASE 1, CHLOROPLASTIC-RELATED"/>
    <property type="match status" value="1"/>
</dbReference>
<dbReference type="Pfam" id="PF00162">
    <property type="entry name" value="PGK"/>
    <property type="match status" value="1"/>
</dbReference>
<dbReference type="PIRSF" id="PIRSF000724">
    <property type="entry name" value="Pgk"/>
    <property type="match status" value="1"/>
</dbReference>
<dbReference type="PRINTS" id="PR00477">
    <property type="entry name" value="PHGLYCKINASE"/>
</dbReference>
<dbReference type="SUPFAM" id="SSF53748">
    <property type="entry name" value="Phosphoglycerate kinase"/>
    <property type="match status" value="1"/>
</dbReference>
<dbReference type="PROSITE" id="PS00111">
    <property type="entry name" value="PGLYCERATE_KINASE"/>
    <property type="match status" value="1"/>
</dbReference>
<reference key="1">
    <citation type="journal article" date="2011" name="J. Bacteriol.">
        <title>Comparative genomics of 28 Salmonella enterica isolates: evidence for CRISPR-mediated adaptive sublineage evolution.</title>
        <authorList>
            <person name="Fricke W.F."/>
            <person name="Mammel M.K."/>
            <person name="McDermott P.F."/>
            <person name="Tartera C."/>
            <person name="White D.G."/>
            <person name="Leclerc J.E."/>
            <person name="Ravel J."/>
            <person name="Cebula T.A."/>
        </authorList>
    </citation>
    <scope>NUCLEOTIDE SEQUENCE [LARGE SCALE GENOMIC DNA]</scope>
    <source>
        <strain>SL483</strain>
    </source>
</reference>